<gene>
    <name type="primary">PAPALPHA</name>
    <name type="synonym">PAP1</name>
    <name evidence="4" type="ordered locus">C5_01745W_B</name>
    <name type="ORF">CaO19.10713</name>
</gene>
<sequence length="558" mass="63268">MNTKTYGVTEPISTNGPTPKENILNDALIQELKNRGSFESEQATKKRVEVLTLFQRLVQEFVYTVSKSKNMSDSMAQDAGGKVFTFGSYRLGVYGPGSDIDTLVVVPKHVTRDDFFSVFADIIRKRPELEEIACVPDAYVPIIKLEFDGISIDLIMARLNIPRVPLDLTLDDKNLLKNLDEKDLRSLNGTRVTDEILQLVPKPTVFKHALRCIKLWAQQRAVYGNIFGFPGGVAWAMLVARICQLYPNAVSSAIVEKFFNIYTKWNWPEPVLLKSIEDGPLQVRVWNPRLYPHDRLHRMPVITPAYPSMCATHNITSSTQKVILAELSRGSSIMQEIHAGKKTWSDLFEKHSFFYKYKFYLCVVAASIDSAEEHKKWSGFIESKLRQLVLKLEVAEGVEIAHPYVKDFSNTFILDDKNAEDIINSYGTLSGEDFLRTLHSSDSDKDDEEFKKIRLTKYYIGLDLNLTKSSDGVRKLDIQYPCAEFYSICKGSTSFTEGVNFIQIKNVKLHELSNDVYEDGEERPKKSGKKRKKVIKEDGQKRVRNESPASSASVNGSS</sequence>
<comment type="function">
    <text evidence="1">Polymerase that creates the 3'-poly(A) tail of mRNA's. May acquire specificity through interaction with a cleavage and polyadenylation factor (By similarity).</text>
</comment>
<comment type="catalytic activity">
    <reaction>
        <text>RNA(n) + ATP = RNA(n)-3'-adenine ribonucleotide + diphosphate</text>
        <dbReference type="Rhea" id="RHEA:11332"/>
        <dbReference type="Rhea" id="RHEA-COMP:14527"/>
        <dbReference type="Rhea" id="RHEA-COMP:17347"/>
        <dbReference type="ChEBI" id="CHEBI:30616"/>
        <dbReference type="ChEBI" id="CHEBI:33019"/>
        <dbReference type="ChEBI" id="CHEBI:140395"/>
        <dbReference type="ChEBI" id="CHEBI:173115"/>
        <dbReference type="EC" id="2.7.7.19"/>
    </reaction>
</comment>
<comment type="cofactor">
    <cofactor evidence="1">
        <name>Mg(2+)</name>
        <dbReference type="ChEBI" id="CHEBI:18420"/>
    </cofactor>
    <cofactor evidence="1">
        <name>Mn(2+)</name>
        <dbReference type="ChEBI" id="CHEBI:29035"/>
    </cofactor>
    <text evidence="1">Binds 2 magnesium ions. Also active with manganese.</text>
</comment>
<comment type="subcellular location">
    <subcellularLocation>
        <location>Nucleus</location>
    </subcellularLocation>
</comment>
<comment type="miscellaneous">
    <text evidence="3">The C.albicans mating-type-like (MTL) locus contains, in addition to the genes for the regulatory proteins (MTLA1, MTLA2, MTLALPHA1 and MTLALPHA2), a and alpha idiomorphs of a phosphatidylinositol kinase (PIKA and PIKALPHA), a poly(A) polymerase (PAPA and PAPALPHA) and an oxysterol binding protein-like protein (OBPA and OBPALPHA). PAPALPHA is not represented in the genomic sequence of strain SC5314 because that haploid assembly includes the mating type a allele of this locus.</text>
</comment>
<comment type="similarity">
    <text evidence="3">Belongs to the poly(A) polymerase family.</text>
</comment>
<protein>
    <recommendedName>
        <fullName>Poly(A) polymerase PAPalpha</fullName>
        <ecNumber>2.7.7.19</ecNumber>
    </recommendedName>
    <alternativeName>
        <fullName>Polynucleotide adenylyltransferase alpha</fullName>
    </alternativeName>
</protein>
<accession>O42617</accession>
<accession>Q59YW5</accession>
<proteinExistence type="inferred from homology"/>
<name>PAP_CANAL</name>
<keyword id="KW-0067">ATP-binding</keyword>
<keyword id="KW-0460">Magnesium</keyword>
<keyword id="KW-0464">Manganese</keyword>
<keyword id="KW-0479">Metal-binding</keyword>
<keyword id="KW-0507">mRNA processing</keyword>
<keyword id="KW-0547">Nucleotide-binding</keyword>
<keyword id="KW-0539">Nucleus</keyword>
<keyword id="KW-0694">RNA-binding</keyword>
<keyword id="KW-0808">Transferase</keyword>
<dbReference type="EC" id="2.7.7.19"/>
<dbReference type="EMBL" id="AF167163">
    <property type="protein sequence ID" value="AAD51412.1"/>
    <property type="molecule type" value="Genomic_DNA"/>
</dbReference>
<dbReference type="EMBL" id="AB009394">
    <property type="protein sequence ID" value="BAA23802.1"/>
    <property type="molecule type" value="Genomic_DNA"/>
</dbReference>
<dbReference type="SMR" id="O42617"/>
<dbReference type="CGD" id="CAL0000202028">
    <property type="gene designation" value="PAPALPHA"/>
</dbReference>
<dbReference type="eggNOG" id="KOG2245">
    <property type="taxonomic scope" value="Eukaryota"/>
</dbReference>
<dbReference type="HOGENOM" id="CLU_011511_4_1_1"/>
<dbReference type="GO" id="GO:0005634">
    <property type="term" value="C:nucleus"/>
    <property type="evidence" value="ECO:0007669"/>
    <property type="project" value="UniProtKB-SubCell"/>
</dbReference>
<dbReference type="GO" id="GO:0005524">
    <property type="term" value="F:ATP binding"/>
    <property type="evidence" value="ECO:0007669"/>
    <property type="project" value="UniProtKB-KW"/>
</dbReference>
<dbReference type="GO" id="GO:0046872">
    <property type="term" value="F:metal ion binding"/>
    <property type="evidence" value="ECO:0007669"/>
    <property type="project" value="UniProtKB-KW"/>
</dbReference>
<dbReference type="GO" id="GO:1990817">
    <property type="term" value="F:poly(A) RNA polymerase activity"/>
    <property type="evidence" value="ECO:0007669"/>
    <property type="project" value="UniProtKB-EC"/>
</dbReference>
<dbReference type="GO" id="GO:0003723">
    <property type="term" value="F:RNA binding"/>
    <property type="evidence" value="ECO:0007669"/>
    <property type="project" value="UniProtKB-KW"/>
</dbReference>
<dbReference type="GO" id="GO:0006397">
    <property type="term" value="P:mRNA processing"/>
    <property type="evidence" value="ECO:0007669"/>
    <property type="project" value="UniProtKB-KW"/>
</dbReference>
<dbReference type="GO" id="GO:0031123">
    <property type="term" value="P:RNA 3'-end processing"/>
    <property type="evidence" value="ECO:0007669"/>
    <property type="project" value="InterPro"/>
</dbReference>
<dbReference type="GO" id="GO:0044011">
    <property type="term" value="P:single-species biofilm formation on inanimate substrate"/>
    <property type="evidence" value="ECO:0000315"/>
    <property type="project" value="CGD"/>
</dbReference>
<dbReference type="CDD" id="cd05402">
    <property type="entry name" value="NT_PAP_TUTase"/>
    <property type="match status" value="1"/>
</dbReference>
<dbReference type="FunFam" id="3.30.70.590:FF:000003">
    <property type="entry name" value="Poly(A) polymerase"/>
    <property type="match status" value="1"/>
</dbReference>
<dbReference type="FunFam" id="3.30.460.10:FF:000002">
    <property type="entry name" value="Poly(A) polymerase alpha, putative"/>
    <property type="match status" value="1"/>
</dbReference>
<dbReference type="FunFam" id="1.10.1410.10:FF:000001">
    <property type="entry name" value="Putative poly(A) polymerase gamma"/>
    <property type="match status" value="1"/>
</dbReference>
<dbReference type="Gene3D" id="1.10.1410.10">
    <property type="match status" value="1"/>
</dbReference>
<dbReference type="Gene3D" id="3.30.460.10">
    <property type="entry name" value="Beta Polymerase, domain 2"/>
    <property type="match status" value="1"/>
</dbReference>
<dbReference type="Gene3D" id="3.30.70.590">
    <property type="entry name" value="Poly(A) polymerase predicted RNA binding domain"/>
    <property type="match status" value="1"/>
</dbReference>
<dbReference type="InterPro" id="IPR043519">
    <property type="entry name" value="NT_sf"/>
</dbReference>
<dbReference type="InterPro" id="IPR011068">
    <property type="entry name" value="NuclTrfase_I-like_C"/>
</dbReference>
<dbReference type="InterPro" id="IPR007012">
    <property type="entry name" value="PolA_pol_cen_dom"/>
</dbReference>
<dbReference type="InterPro" id="IPR048840">
    <property type="entry name" value="PolA_pol_NTPase"/>
</dbReference>
<dbReference type="InterPro" id="IPR007010">
    <property type="entry name" value="PolA_pol_RNA-bd_dom"/>
</dbReference>
<dbReference type="InterPro" id="IPR014492">
    <property type="entry name" value="PolyA_polymerase"/>
</dbReference>
<dbReference type="PANTHER" id="PTHR10682">
    <property type="entry name" value="POLY A POLYMERASE"/>
    <property type="match status" value="1"/>
</dbReference>
<dbReference type="PANTHER" id="PTHR10682:SF10">
    <property type="entry name" value="POLYNUCLEOTIDE ADENYLYLTRANSFERASE"/>
    <property type="match status" value="1"/>
</dbReference>
<dbReference type="Pfam" id="PF04928">
    <property type="entry name" value="PAP_central"/>
    <property type="match status" value="1"/>
</dbReference>
<dbReference type="Pfam" id="PF20750">
    <property type="entry name" value="PAP_NTPase"/>
    <property type="match status" value="1"/>
</dbReference>
<dbReference type="Pfam" id="PF04926">
    <property type="entry name" value="PAP_RNA-bind"/>
    <property type="match status" value="1"/>
</dbReference>
<dbReference type="PIRSF" id="PIRSF018425">
    <property type="entry name" value="PolyA_polymerase"/>
    <property type="match status" value="1"/>
</dbReference>
<dbReference type="SUPFAM" id="SSF81301">
    <property type="entry name" value="Nucleotidyltransferase"/>
    <property type="match status" value="1"/>
</dbReference>
<dbReference type="SUPFAM" id="SSF55003">
    <property type="entry name" value="PAP/Archaeal CCA-adding enzyme, C-terminal domain"/>
    <property type="match status" value="1"/>
</dbReference>
<dbReference type="SUPFAM" id="SSF81631">
    <property type="entry name" value="PAP/OAS1 substrate-binding domain"/>
    <property type="match status" value="1"/>
</dbReference>
<organism>
    <name type="scientific">Candida albicans (strain SC5314 / ATCC MYA-2876)</name>
    <name type="common">Yeast</name>
    <dbReference type="NCBI Taxonomy" id="237561"/>
    <lineage>
        <taxon>Eukaryota</taxon>
        <taxon>Fungi</taxon>
        <taxon>Dikarya</taxon>
        <taxon>Ascomycota</taxon>
        <taxon>Saccharomycotina</taxon>
        <taxon>Pichiomycetes</taxon>
        <taxon>Debaryomycetaceae</taxon>
        <taxon>Candida/Lodderomyces clade</taxon>
        <taxon>Candida</taxon>
    </lineage>
</organism>
<evidence type="ECO:0000250" key="1"/>
<evidence type="ECO:0000256" key="2">
    <source>
        <dbReference type="SAM" id="MobiDB-lite"/>
    </source>
</evidence>
<evidence type="ECO:0000305" key="3"/>
<evidence type="ECO:0000312" key="4">
    <source>
        <dbReference type="CGD" id="CAL0000202028"/>
    </source>
</evidence>
<feature type="chain" id="PRO_0000051618" description="Poly(A) polymerase PAPalpha">
    <location>
        <begin position="1"/>
        <end position="558"/>
    </location>
</feature>
<feature type="region of interest" description="Disordered" evidence="2">
    <location>
        <begin position="1"/>
        <end position="20"/>
    </location>
</feature>
<feature type="region of interest" description="Disordered" evidence="2">
    <location>
        <begin position="516"/>
        <end position="558"/>
    </location>
</feature>
<feature type="compositionally biased region" description="Polar residues" evidence="2">
    <location>
        <begin position="1"/>
        <end position="17"/>
    </location>
</feature>
<feature type="compositionally biased region" description="Basic and acidic residues" evidence="2">
    <location>
        <begin position="535"/>
        <end position="545"/>
    </location>
</feature>
<feature type="compositionally biased region" description="Low complexity" evidence="2">
    <location>
        <begin position="547"/>
        <end position="558"/>
    </location>
</feature>
<feature type="binding site" evidence="1">
    <location>
        <begin position="86"/>
        <end position="88"/>
    </location>
    <ligand>
        <name>ATP</name>
        <dbReference type="ChEBI" id="CHEBI:30616"/>
    </ligand>
</feature>
<feature type="binding site" evidence="1">
    <location>
        <begin position="99"/>
        <end position="101"/>
    </location>
    <ligand>
        <name>ATP</name>
        <dbReference type="ChEBI" id="CHEBI:30616"/>
    </ligand>
</feature>
<feature type="binding site" evidence="1">
    <location>
        <position position="99"/>
    </location>
    <ligand>
        <name>Mg(2+)</name>
        <dbReference type="ChEBI" id="CHEBI:18420"/>
        <label>1</label>
        <note>catalytic</note>
    </ligand>
</feature>
<feature type="binding site" evidence="1">
    <location>
        <position position="99"/>
    </location>
    <ligand>
        <name>Mg(2+)</name>
        <dbReference type="ChEBI" id="CHEBI:18420"/>
        <label>2</label>
        <note>catalytic</note>
    </ligand>
</feature>
<feature type="binding site" evidence="1">
    <location>
        <position position="101"/>
    </location>
    <ligand>
        <name>Mg(2+)</name>
        <dbReference type="ChEBI" id="CHEBI:18420"/>
        <label>1</label>
        <note>catalytic</note>
    </ligand>
</feature>
<feature type="binding site" evidence="1">
    <location>
        <position position="101"/>
    </location>
    <ligand>
        <name>Mg(2+)</name>
        <dbReference type="ChEBI" id="CHEBI:18420"/>
        <label>2</label>
        <note>catalytic</note>
    </ligand>
</feature>
<feature type="binding site" evidence="1">
    <location>
        <position position="153"/>
    </location>
    <ligand>
        <name>ATP</name>
        <dbReference type="ChEBI" id="CHEBI:30616"/>
    </ligand>
</feature>
<feature type="binding site" evidence="1">
    <location>
        <position position="153"/>
    </location>
    <ligand>
        <name>Mg(2+)</name>
        <dbReference type="ChEBI" id="CHEBI:18420"/>
        <label>2</label>
        <note>catalytic</note>
    </ligand>
</feature>
<feature type="binding site" evidence="1">
    <location>
        <position position="214"/>
    </location>
    <ligand>
        <name>ATP</name>
        <dbReference type="ChEBI" id="CHEBI:30616"/>
    </ligand>
</feature>
<feature type="binding site" evidence="1">
    <location>
        <position position="223"/>
    </location>
    <ligand>
        <name>ATP</name>
        <dbReference type="ChEBI" id="CHEBI:30616"/>
    </ligand>
</feature>
<feature type="binding site" evidence="1">
    <location>
        <begin position="232"/>
        <end position="233"/>
    </location>
    <ligand>
        <name>ATP</name>
        <dbReference type="ChEBI" id="CHEBI:30616"/>
    </ligand>
</feature>
<feature type="site" description="Interaction with RNA" evidence="1">
    <location>
        <position position="144"/>
    </location>
</feature>
<feature type="site" description="Interaction with RNA" evidence="1">
    <location>
        <position position="313"/>
    </location>
</feature>
<feature type="site" description="Interaction with RNA" evidence="1">
    <location>
        <position position="314"/>
    </location>
</feature>
<feature type="site" description="Interaction with RNA" evidence="1">
    <location>
        <position position="386"/>
    </location>
</feature>
<feature type="site" description="Interaction with RNA" evidence="1">
    <location>
        <position position="391"/>
    </location>
</feature>
<feature type="site" description="Interaction with RNA" evidence="1">
    <location>
        <position position="484"/>
    </location>
</feature>
<reference key="1">
    <citation type="journal article" date="1999" name="Science">
        <title>Identification of a mating type-like locus in the asexual pathogenic yeast Candida albicans.</title>
        <authorList>
            <person name="Hull C.M."/>
            <person name="Johnson A.D."/>
        </authorList>
    </citation>
    <scope>NUCLEOTIDE SEQUENCE [GENOMIC DNA]</scope>
    <source>
        <strain>SC5314 / ATCC MYA-2876</strain>
    </source>
</reference>
<reference key="2">
    <citation type="submission" date="1997-12" db="EMBL/GenBank/DDBJ databases">
        <title>Molecular cloning of Candida albicans poly(A) polymerase gene.</title>
        <authorList>
            <person name="Ishii N."/>
            <person name="Aoki Y."/>
            <person name="Arisawa M."/>
        </authorList>
    </citation>
    <scope>NUCLEOTIDE SEQUENCE [GENOMIC DNA]</scope>
    <source>
        <strain>ATCC 10259 / CBS 5796 / DSM 5817 / JCM 2078 / NBRC 1060</strain>
    </source>
</reference>